<name>METH_ALIF1</name>
<reference key="1">
    <citation type="journal article" date="2005" name="Proc. Natl. Acad. Sci. U.S.A.">
        <title>Complete genome sequence of Vibrio fischeri: a symbiotic bacterium with pathogenic congeners.</title>
        <authorList>
            <person name="Ruby E.G."/>
            <person name="Urbanowski M."/>
            <person name="Campbell J."/>
            <person name="Dunn A."/>
            <person name="Faini M."/>
            <person name="Gunsalus R."/>
            <person name="Lostroh P."/>
            <person name="Lupp C."/>
            <person name="McCann J."/>
            <person name="Millikan D."/>
            <person name="Schaefer A."/>
            <person name="Stabb E."/>
            <person name="Stevens A."/>
            <person name="Visick K."/>
            <person name="Whistler C."/>
            <person name="Greenberg E.P."/>
        </authorList>
    </citation>
    <scope>NUCLEOTIDE SEQUENCE [LARGE SCALE GENOMIC DNA]</scope>
    <source>
        <strain>ATCC 700601 / ES114</strain>
    </source>
</reference>
<evidence type="ECO:0000250" key="1"/>
<evidence type="ECO:0000250" key="2">
    <source>
        <dbReference type="UniProtKB" id="P13009"/>
    </source>
</evidence>
<evidence type="ECO:0000255" key="3">
    <source>
        <dbReference type="PROSITE-ProRule" id="PRU00333"/>
    </source>
</evidence>
<evidence type="ECO:0000255" key="4">
    <source>
        <dbReference type="PROSITE-ProRule" id="PRU00334"/>
    </source>
</evidence>
<evidence type="ECO:0000255" key="5">
    <source>
        <dbReference type="PROSITE-ProRule" id="PRU00346"/>
    </source>
</evidence>
<evidence type="ECO:0000255" key="6">
    <source>
        <dbReference type="PROSITE-ProRule" id="PRU00666"/>
    </source>
</evidence>
<evidence type="ECO:0000255" key="7">
    <source>
        <dbReference type="PROSITE-ProRule" id="PRU00667"/>
    </source>
</evidence>
<evidence type="ECO:0000305" key="8"/>
<dbReference type="EC" id="2.1.1.13"/>
<dbReference type="EMBL" id="CP000020">
    <property type="protein sequence ID" value="AAW84832.1"/>
    <property type="molecule type" value="Genomic_DNA"/>
</dbReference>
<dbReference type="RefSeq" id="WP_011261140.1">
    <property type="nucleotide sequence ID" value="NC_006840.2"/>
</dbReference>
<dbReference type="RefSeq" id="YP_203720.1">
    <property type="nucleotide sequence ID" value="NC_006840.2"/>
</dbReference>
<dbReference type="SMR" id="Q5E814"/>
<dbReference type="STRING" id="312309.VF_0337"/>
<dbReference type="EnsemblBacteria" id="AAW84832">
    <property type="protein sequence ID" value="AAW84832"/>
    <property type="gene ID" value="VF_0337"/>
</dbReference>
<dbReference type="GeneID" id="54162965"/>
<dbReference type="KEGG" id="vfi:VF_0337"/>
<dbReference type="PATRIC" id="fig|312309.11.peg.328"/>
<dbReference type="eggNOG" id="COG0646">
    <property type="taxonomic scope" value="Bacteria"/>
</dbReference>
<dbReference type="eggNOG" id="COG1410">
    <property type="taxonomic scope" value="Bacteria"/>
</dbReference>
<dbReference type="HOGENOM" id="CLU_004914_2_2_6"/>
<dbReference type="OrthoDB" id="9803687at2"/>
<dbReference type="UniPathway" id="UPA00051">
    <property type="reaction ID" value="UER00081"/>
</dbReference>
<dbReference type="Proteomes" id="UP000000537">
    <property type="component" value="Chromosome I"/>
</dbReference>
<dbReference type="GO" id="GO:0005829">
    <property type="term" value="C:cytosol"/>
    <property type="evidence" value="ECO:0007669"/>
    <property type="project" value="TreeGrafter"/>
</dbReference>
<dbReference type="GO" id="GO:0031419">
    <property type="term" value="F:cobalamin binding"/>
    <property type="evidence" value="ECO:0007669"/>
    <property type="project" value="UniProtKB-KW"/>
</dbReference>
<dbReference type="GO" id="GO:0008705">
    <property type="term" value="F:methionine synthase activity"/>
    <property type="evidence" value="ECO:0007669"/>
    <property type="project" value="UniProtKB-EC"/>
</dbReference>
<dbReference type="GO" id="GO:0008270">
    <property type="term" value="F:zinc ion binding"/>
    <property type="evidence" value="ECO:0007669"/>
    <property type="project" value="InterPro"/>
</dbReference>
<dbReference type="GO" id="GO:0050667">
    <property type="term" value="P:homocysteine metabolic process"/>
    <property type="evidence" value="ECO:0007669"/>
    <property type="project" value="TreeGrafter"/>
</dbReference>
<dbReference type="GO" id="GO:0032259">
    <property type="term" value="P:methylation"/>
    <property type="evidence" value="ECO:0007669"/>
    <property type="project" value="UniProtKB-KW"/>
</dbReference>
<dbReference type="GO" id="GO:0046653">
    <property type="term" value="P:tetrahydrofolate metabolic process"/>
    <property type="evidence" value="ECO:0007669"/>
    <property type="project" value="TreeGrafter"/>
</dbReference>
<dbReference type="CDD" id="cd02069">
    <property type="entry name" value="methionine_synthase_B12_BD"/>
    <property type="match status" value="1"/>
</dbReference>
<dbReference type="CDD" id="cd00740">
    <property type="entry name" value="MeTr"/>
    <property type="match status" value="1"/>
</dbReference>
<dbReference type="FunFam" id="1.10.1240.10:FF:000001">
    <property type="entry name" value="Methionine synthase"/>
    <property type="match status" value="1"/>
</dbReference>
<dbReference type="FunFam" id="3.20.20.20:FF:000002">
    <property type="entry name" value="Methionine synthase"/>
    <property type="match status" value="1"/>
</dbReference>
<dbReference type="FunFam" id="3.20.20.330:FF:000001">
    <property type="entry name" value="Methionine synthase"/>
    <property type="match status" value="1"/>
</dbReference>
<dbReference type="FunFam" id="3.40.50.280:FF:000001">
    <property type="entry name" value="Methionine synthase"/>
    <property type="match status" value="1"/>
</dbReference>
<dbReference type="Gene3D" id="3.40.50.280">
    <property type="entry name" value="Cobalamin-binding domain"/>
    <property type="match status" value="1"/>
</dbReference>
<dbReference type="Gene3D" id="1.10.288.10">
    <property type="entry name" value="Cobalamin-dependent Methionine Synthase, domain 2"/>
    <property type="match status" value="1"/>
</dbReference>
<dbReference type="Gene3D" id="3.20.20.20">
    <property type="entry name" value="Dihydropteroate synthase-like"/>
    <property type="match status" value="1"/>
</dbReference>
<dbReference type="Gene3D" id="3.20.20.330">
    <property type="entry name" value="Homocysteine-binding-like domain"/>
    <property type="match status" value="1"/>
</dbReference>
<dbReference type="Gene3D" id="1.10.1240.10">
    <property type="entry name" value="Methionine synthase domain"/>
    <property type="match status" value="1"/>
</dbReference>
<dbReference type="Gene3D" id="3.10.196.10">
    <property type="entry name" value="Vitamin B12-dependent methionine synthase, activation domain"/>
    <property type="match status" value="1"/>
</dbReference>
<dbReference type="InterPro" id="IPR003759">
    <property type="entry name" value="Cbl-bd_cap"/>
</dbReference>
<dbReference type="InterPro" id="IPR006158">
    <property type="entry name" value="Cobalamin-bd"/>
</dbReference>
<dbReference type="InterPro" id="IPR036724">
    <property type="entry name" value="Cobalamin-bd_sf"/>
</dbReference>
<dbReference type="InterPro" id="IPR011005">
    <property type="entry name" value="Dihydropteroate_synth-like_sf"/>
</dbReference>
<dbReference type="InterPro" id="IPR003726">
    <property type="entry name" value="HCY_dom"/>
</dbReference>
<dbReference type="InterPro" id="IPR036589">
    <property type="entry name" value="HCY_dom_sf"/>
</dbReference>
<dbReference type="InterPro" id="IPR050554">
    <property type="entry name" value="Met_Synthase/Corrinoid"/>
</dbReference>
<dbReference type="InterPro" id="IPR033706">
    <property type="entry name" value="Met_synthase_B12-bd"/>
</dbReference>
<dbReference type="InterPro" id="IPR011822">
    <property type="entry name" value="MetH"/>
</dbReference>
<dbReference type="InterPro" id="IPR036594">
    <property type="entry name" value="Meth_synthase_dom"/>
</dbReference>
<dbReference type="InterPro" id="IPR000489">
    <property type="entry name" value="Pterin-binding_dom"/>
</dbReference>
<dbReference type="InterPro" id="IPR004223">
    <property type="entry name" value="VitB12-dep_Met_synth_activ_dom"/>
</dbReference>
<dbReference type="InterPro" id="IPR037010">
    <property type="entry name" value="VitB12-dep_Met_synth_activ_sf"/>
</dbReference>
<dbReference type="NCBIfam" id="TIGR02082">
    <property type="entry name" value="metH"/>
    <property type="match status" value="1"/>
</dbReference>
<dbReference type="NCBIfam" id="NF007024">
    <property type="entry name" value="PRK09490.1"/>
    <property type="match status" value="1"/>
</dbReference>
<dbReference type="PANTHER" id="PTHR45833">
    <property type="entry name" value="METHIONINE SYNTHASE"/>
    <property type="match status" value="1"/>
</dbReference>
<dbReference type="PANTHER" id="PTHR45833:SF1">
    <property type="entry name" value="METHIONINE SYNTHASE"/>
    <property type="match status" value="1"/>
</dbReference>
<dbReference type="Pfam" id="PF02310">
    <property type="entry name" value="B12-binding"/>
    <property type="match status" value="1"/>
</dbReference>
<dbReference type="Pfam" id="PF02607">
    <property type="entry name" value="B12-binding_2"/>
    <property type="match status" value="1"/>
</dbReference>
<dbReference type="Pfam" id="PF02965">
    <property type="entry name" value="Met_synt_B12"/>
    <property type="match status" value="1"/>
</dbReference>
<dbReference type="Pfam" id="PF00809">
    <property type="entry name" value="Pterin_bind"/>
    <property type="match status" value="1"/>
</dbReference>
<dbReference type="Pfam" id="PF02574">
    <property type="entry name" value="S-methyl_trans"/>
    <property type="match status" value="1"/>
</dbReference>
<dbReference type="PIRSF" id="PIRSF000381">
    <property type="entry name" value="MetH"/>
    <property type="match status" value="1"/>
</dbReference>
<dbReference type="SMART" id="SM01018">
    <property type="entry name" value="B12-binding_2"/>
    <property type="match status" value="1"/>
</dbReference>
<dbReference type="SUPFAM" id="SSF52242">
    <property type="entry name" value="Cobalamin (vitamin B12)-binding domain"/>
    <property type="match status" value="1"/>
</dbReference>
<dbReference type="SUPFAM" id="SSF51717">
    <property type="entry name" value="Dihydropteroate synthetase-like"/>
    <property type="match status" value="1"/>
</dbReference>
<dbReference type="SUPFAM" id="SSF82282">
    <property type="entry name" value="Homocysteine S-methyltransferase"/>
    <property type="match status" value="1"/>
</dbReference>
<dbReference type="SUPFAM" id="SSF56507">
    <property type="entry name" value="Methionine synthase activation domain-like"/>
    <property type="match status" value="1"/>
</dbReference>
<dbReference type="SUPFAM" id="SSF47644">
    <property type="entry name" value="Methionine synthase domain"/>
    <property type="match status" value="1"/>
</dbReference>
<dbReference type="PROSITE" id="PS50974">
    <property type="entry name" value="ADOMET_ACTIVATION"/>
    <property type="match status" value="1"/>
</dbReference>
<dbReference type="PROSITE" id="PS51332">
    <property type="entry name" value="B12_BINDING"/>
    <property type="match status" value="1"/>
</dbReference>
<dbReference type="PROSITE" id="PS51337">
    <property type="entry name" value="B12_BINDING_NTER"/>
    <property type="match status" value="1"/>
</dbReference>
<dbReference type="PROSITE" id="PS50970">
    <property type="entry name" value="HCY"/>
    <property type="match status" value="1"/>
</dbReference>
<dbReference type="PROSITE" id="PS50972">
    <property type="entry name" value="PTERIN_BINDING"/>
    <property type="match status" value="1"/>
</dbReference>
<gene>
    <name type="primary">metH</name>
    <name type="ordered locus">VF_0337</name>
</gene>
<organism>
    <name type="scientific">Aliivibrio fischeri (strain ATCC 700601 / ES114)</name>
    <name type="common">Vibrio fischeri</name>
    <dbReference type="NCBI Taxonomy" id="312309"/>
    <lineage>
        <taxon>Bacteria</taxon>
        <taxon>Pseudomonadati</taxon>
        <taxon>Pseudomonadota</taxon>
        <taxon>Gammaproteobacteria</taxon>
        <taxon>Vibrionales</taxon>
        <taxon>Vibrionaceae</taxon>
        <taxon>Aliivibrio</taxon>
    </lineage>
</organism>
<feature type="chain" id="PRO_0000204539" description="Methionine synthase">
    <location>
        <begin position="1"/>
        <end position="1226"/>
    </location>
</feature>
<feature type="domain" description="Hcy-binding" evidence="3">
    <location>
        <begin position="7"/>
        <end position="327"/>
    </location>
</feature>
<feature type="domain" description="Pterin-binding" evidence="4">
    <location>
        <begin position="358"/>
        <end position="619"/>
    </location>
</feature>
<feature type="domain" description="B12-binding N-terminal" evidence="7">
    <location>
        <begin position="652"/>
        <end position="746"/>
    </location>
</feature>
<feature type="domain" description="B12-binding" evidence="6">
    <location>
        <begin position="748"/>
        <end position="883"/>
    </location>
</feature>
<feature type="domain" description="AdoMet activation" evidence="5">
    <location>
        <begin position="899"/>
        <end position="1226"/>
    </location>
</feature>
<feature type="binding site" evidence="3">
    <location>
        <position position="249"/>
    </location>
    <ligand>
        <name>Zn(2+)</name>
        <dbReference type="ChEBI" id="CHEBI:29105"/>
    </ligand>
</feature>
<feature type="binding site" evidence="3">
    <location>
        <position position="312"/>
    </location>
    <ligand>
        <name>Zn(2+)</name>
        <dbReference type="ChEBI" id="CHEBI:29105"/>
    </ligand>
</feature>
<feature type="binding site" evidence="3">
    <location>
        <position position="313"/>
    </location>
    <ligand>
        <name>Zn(2+)</name>
        <dbReference type="ChEBI" id="CHEBI:29105"/>
    </ligand>
</feature>
<feature type="binding site" evidence="2">
    <location>
        <position position="696"/>
    </location>
    <ligand>
        <name>methylcob(III)alamin</name>
        <dbReference type="ChEBI" id="CHEBI:28115"/>
    </ligand>
</feature>
<feature type="binding site" evidence="2">
    <location>
        <begin position="758"/>
        <end position="762"/>
    </location>
    <ligand>
        <name>methylcob(III)alamin</name>
        <dbReference type="ChEBI" id="CHEBI:28115"/>
    </ligand>
</feature>
<feature type="binding site" description="axial binding residue" evidence="2">
    <location>
        <position position="761"/>
    </location>
    <ligand>
        <name>methylcob(III)alamin</name>
        <dbReference type="ChEBI" id="CHEBI:28115"/>
    </ligand>
    <ligandPart>
        <name>Co</name>
        <dbReference type="ChEBI" id="CHEBI:27638"/>
    </ligandPart>
</feature>
<feature type="binding site" evidence="2">
    <location>
        <position position="806"/>
    </location>
    <ligand>
        <name>methylcob(III)alamin</name>
        <dbReference type="ChEBI" id="CHEBI:28115"/>
    </ligand>
</feature>
<feature type="binding site" evidence="2">
    <location>
        <position position="810"/>
    </location>
    <ligand>
        <name>methylcob(III)alamin</name>
        <dbReference type="ChEBI" id="CHEBI:28115"/>
    </ligand>
</feature>
<feature type="binding site" evidence="2">
    <location>
        <position position="862"/>
    </location>
    <ligand>
        <name>methylcob(III)alamin</name>
        <dbReference type="ChEBI" id="CHEBI:28115"/>
    </ligand>
</feature>
<feature type="binding site" evidence="1">
    <location>
        <position position="949"/>
    </location>
    <ligand>
        <name>S-adenosyl-L-methionine</name>
        <dbReference type="ChEBI" id="CHEBI:59789"/>
    </ligand>
</feature>
<feature type="binding site" evidence="1">
    <location>
        <position position="1137"/>
    </location>
    <ligand>
        <name>S-adenosyl-L-methionine</name>
        <dbReference type="ChEBI" id="CHEBI:59789"/>
    </ligand>
</feature>
<feature type="binding site" evidence="1">
    <location>
        <begin position="1192"/>
        <end position="1193"/>
    </location>
    <ligand>
        <name>S-adenosyl-L-methionine</name>
        <dbReference type="ChEBI" id="CHEBI:59789"/>
    </ligand>
</feature>
<sequence length="1226" mass="136369">MAGSNIKVQIEKQLSERILLIDGGMGTMIQGYKFEEEDYRGERFNKWHCDLKGNNDLLVLSQPQIIRDIHEAYLEAGADILETNTFNATTIAMADYDMESLSEEINFEAAKLAREVADKWTEKTPNKPRYVAGVLGPTNRTCSISPDVNDPGFRNVSFDELVEAYSESTRALIRGGSDLILIETIFDTLNAKACSFAVESVFEELDITLPVMISGTITDASGRTLSGQTTEAFYNALRHVKPISFGLNCALGPDELREYVSDLSRISECYVSAHPNAGLPNAFGEYDLSPEDMAEHVAEWASSGFLNLIGGCCGTTPEHIRQMALVVEGVKPRQLPELPVACRLSGLEPLTIEKDSLFINVGERTNVTGSARFKRLIKEELYDEALSVAQEQVENGAQIIDINMDEGMLDAEACMVRFLNLCASEPEISKVPVMVDSSKWEVIEAGLKCIQGKGIVNSISLKEGKEKFVHQAKLIRRYGAAVIVMAFDEVGQADTRERKIEICTNAYNILVDEVGFPPEDIIFDPNIFAVATGIDEHNNYAVDFIEAVGDIKRTLPHAMISGGVSNVSFSFRGNNYVREAIHAVFLYHCFKNGMDMGIVNAGQLEIYDNVPEDLREAVEDVVLNRRDDSTERLLDIATEYLERAVGKVEDKSALEWRDWPVEKRLEHSLVKGITEFIVEDTEEARINAEKPIEVIEGPLMDGMNVVGDLFGEGKMFLPQVVKSARVMKQAVAHLEPFINASKEVGATNGKILLATVKGDVHDIGKNIVGVVLQCNNYEIIDLGVMVSCETILKVAKEENVDIIGLSGLITPSLDEMVHVAKEMERQGFDLPLLIGGATTSKAHTAVKIEQNYSQPVVYVNNASRAVGVCTSLLSDELKPSFVEKLDIDYERVREQHSRKQPRTKPVTLEVARANKVAIDWASYTPPVPLKPGVHIFDNFDVSTLRNYIDWTPFFMTWSLVGKYPKILDHEEVGEEAKRLFKDANDLLDRVEKEGLLKARGMCALFPASSVGDDIEVYTDESRTKVAKVLHNLRQQTEKPKGFNYCLSDYIAPKESGKNDWIGGFAVTGGIGERELADEYKANGDDYNAIMIQAVADRLAEAFAEYLHEKVRKEIWGYSPNETLSNDDLIREKYQGIRPAPGYPACPEHTEKGALWELMNVEESIGMSLTSSYAMWPGASVSGMYFSHPDSRYFAIAQIQQDQAESYADRKGWNMLEAEKWLGPNLN</sequence>
<protein>
    <recommendedName>
        <fullName>Methionine synthase</fullName>
        <ecNumber>2.1.1.13</ecNumber>
    </recommendedName>
    <alternativeName>
        <fullName>5-methyltetrahydrofolate--homocysteine methyltransferase</fullName>
    </alternativeName>
    <alternativeName>
        <fullName>Methionine synthase, vitamin-B12 dependent</fullName>
        <shortName>MS</shortName>
    </alternativeName>
</protein>
<proteinExistence type="inferred from homology"/>
<keyword id="KW-0028">Amino-acid biosynthesis</keyword>
<keyword id="KW-0846">Cobalamin</keyword>
<keyword id="KW-0170">Cobalt</keyword>
<keyword id="KW-0479">Metal-binding</keyword>
<keyword id="KW-0486">Methionine biosynthesis</keyword>
<keyword id="KW-0489">Methyltransferase</keyword>
<keyword id="KW-1185">Reference proteome</keyword>
<keyword id="KW-0677">Repeat</keyword>
<keyword id="KW-0949">S-adenosyl-L-methionine</keyword>
<keyword id="KW-0808">Transferase</keyword>
<keyword id="KW-0862">Zinc</keyword>
<accession>Q5E814</accession>
<comment type="function">
    <text evidence="1">Catalyzes the transfer of a methyl group from methyl-cobalamin to homocysteine, yielding enzyme-bound cob(I)alamin and methionine. Subsequently, remethylates the cofactor using methyltetrahydrofolate (By similarity).</text>
</comment>
<comment type="catalytic activity">
    <reaction>
        <text>(6S)-5-methyl-5,6,7,8-tetrahydrofolate + L-homocysteine = (6S)-5,6,7,8-tetrahydrofolate + L-methionine</text>
        <dbReference type="Rhea" id="RHEA:11172"/>
        <dbReference type="ChEBI" id="CHEBI:18608"/>
        <dbReference type="ChEBI" id="CHEBI:57453"/>
        <dbReference type="ChEBI" id="CHEBI:57844"/>
        <dbReference type="ChEBI" id="CHEBI:58199"/>
        <dbReference type="EC" id="2.1.1.13"/>
    </reaction>
</comment>
<comment type="cofactor">
    <cofactor evidence="1">
        <name>methylcob(III)alamin</name>
        <dbReference type="ChEBI" id="CHEBI:28115"/>
    </cofactor>
</comment>
<comment type="cofactor">
    <cofactor evidence="1">
        <name>Zn(2+)</name>
        <dbReference type="ChEBI" id="CHEBI:29105"/>
    </cofactor>
    <text evidence="1">Binds 1 zinc ion per subunit.</text>
</comment>
<comment type="pathway">
    <text>Amino-acid biosynthesis; L-methionine biosynthesis via de novo pathway; L-methionine from L-homocysteine (MetH route): step 1/1.</text>
</comment>
<comment type="domain">
    <text evidence="1">Modular enzyme with four functionally distinct domains. The isolated Hcy-binding domain catalyzes methyl transfer from free methylcobalamin to homocysteine. The Hcy-binding domain in association with the pterin-binding domain catalyzes the methylation of cob(I)alamin by methyltetrahydrofolate and the methylation of homocysteine. The B12-binding domain binds the cofactor. The AdoMet activation domain binds S-adenosyl-L-methionine. Under aerobic conditions cob(I)alamin can be converted to inactive cob(II)alamin. Reductive methylation by S-adenosyl-L-methionine and flavodoxin regenerates methylcobalamin (By similarity).</text>
</comment>
<comment type="miscellaneous">
    <text evidence="1">L-homocysteine is bound via the zinc atom.</text>
</comment>
<comment type="similarity">
    <text evidence="8">Belongs to the vitamin-B12 dependent methionine synthase family.</text>
</comment>